<name>MBD1_ARATH</name>
<keyword id="KW-0238">DNA-binding</keyword>
<keyword id="KW-0479">Metal-binding</keyword>
<keyword id="KW-0539">Nucleus</keyword>
<keyword id="KW-1185">Reference proteome</keyword>
<keyword id="KW-0804">Transcription</keyword>
<keyword id="KW-0805">Transcription regulation</keyword>
<keyword id="KW-0862">Zinc</keyword>
<keyword id="KW-0863">Zinc-finger</keyword>
<gene>
    <name type="primary">MBD1</name>
    <name type="ordered locus">At4g22745</name>
    <name type="ORF">T12H17.130</name>
</gene>
<comment type="function">
    <text evidence="1">Probable transcriptional regulator.</text>
</comment>
<comment type="interaction">
    <interactant intactId="EBI-4445335">
        <id>Q5XEN5</id>
    </interactant>
    <interactant intactId="EBI-15198431">
        <id>Q9CAV7</id>
        <label>At3g04930</label>
    </interactant>
    <organismsDiffer>false</organismsDiffer>
    <experiments>3</experiments>
</comment>
<comment type="interaction">
    <interactant intactId="EBI-4445335">
        <id>Q5XEN5</id>
    </interactant>
    <interactant intactId="EBI-15191765">
        <id>O81793</id>
        <label>At4g35610</label>
    </interactant>
    <organismsDiffer>false</organismsDiffer>
    <experiments>3</experiments>
</comment>
<comment type="interaction">
    <interactant intactId="EBI-4445335">
        <id>Q5XEN5</id>
    </interactant>
    <interactant intactId="EBI-4426649">
        <id>Q17TI5</id>
        <label>BRX</label>
    </interactant>
    <organismsDiffer>false</organismsDiffer>
    <experiments>3</experiments>
</comment>
<comment type="interaction">
    <interactant intactId="EBI-4445335">
        <id>Q5XEN5</id>
    </interactant>
    <interactant intactId="EBI-4447483">
        <id>O81801</id>
        <label>DAZ3</label>
    </interactant>
    <organismsDiffer>false</organismsDiffer>
    <experiments>3</experiments>
</comment>
<comment type="interaction">
    <interactant intactId="EBI-4445335">
        <id>Q5XEN5</id>
    </interactant>
    <interactant intactId="EBI-632243">
        <id>P93830</id>
        <label>IAA17</label>
    </interactant>
    <organismsDiffer>false</organismsDiffer>
    <experiments>7</experiments>
</comment>
<comment type="interaction">
    <interactant intactId="EBI-4445335">
        <id>Q5XEN5</id>
    </interactant>
    <interactant intactId="EBI-632343">
        <id>P49678</id>
        <label>IAA2</label>
    </interactant>
    <organismsDiffer>false</organismsDiffer>
    <experiments>7</experiments>
</comment>
<comment type="interaction">
    <interactant intactId="EBI-4445335">
        <id>Q5XEN5</id>
    </interactant>
    <interactant intactId="EBI-15191779">
        <id>Q9LJW5</id>
        <label>MIF2</label>
    </interactant>
    <organismsDiffer>false</organismsDiffer>
    <experiments>4</experiments>
</comment>
<comment type="subcellular location">
    <subcellularLocation>
        <location evidence="6">Nucleus</location>
    </subcellularLocation>
</comment>
<comment type="tissue specificity">
    <text evidence="5 7">Mostly expressed in flowers and buds.</text>
</comment>
<comment type="domain">
    <text evidence="1">The methyl-CpG-binding domain (MBD) functions both in binding to methylated DNA and in protein interactions.</text>
</comment>
<comment type="sequence caution" evidence="8">
    <conflict type="erroneous gene model prediction">
        <sequence resource="EMBL-CDS" id="CAA16559"/>
    </conflict>
</comment>
<comment type="sequence caution" evidence="8">
    <conflict type="erroneous gene model prediction">
        <sequence resource="EMBL-CDS" id="CAB79229"/>
    </conflict>
</comment>
<feature type="chain" id="PRO_0000405277" description="Methyl-CpG-binding domain-containing protein 1">
    <location>
        <begin position="1"/>
        <end position="204"/>
    </location>
</feature>
<feature type="domain" description="MBD" evidence="2">
    <location>
        <begin position="110"/>
        <end position="180"/>
    </location>
</feature>
<feature type="zinc finger region" description="CW-type" evidence="3">
    <location>
        <begin position="49"/>
        <end position="104"/>
    </location>
</feature>
<feature type="region of interest" description="Disordered" evidence="4">
    <location>
        <begin position="1"/>
        <end position="46"/>
    </location>
</feature>
<feature type="short sequence motif" description="MBD-associated domain (MAD)">
    <location>
        <begin position="58"/>
        <end position="96"/>
    </location>
</feature>
<feature type="compositionally biased region" description="Polar residues" evidence="4">
    <location>
        <begin position="15"/>
        <end position="24"/>
    </location>
</feature>
<feature type="compositionally biased region" description="Basic and acidic residues" evidence="4">
    <location>
        <begin position="25"/>
        <end position="34"/>
    </location>
</feature>
<feature type="binding site" evidence="3">
    <location>
        <position position="59"/>
    </location>
    <ligand>
        <name>Zn(2+)</name>
        <dbReference type="ChEBI" id="CHEBI:29105"/>
    </ligand>
</feature>
<feature type="binding site" evidence="3">
    <location>
        <position position="62"/>
    </location>
    <ligand>
        <name>Zn(2+)</name>
        <dbReference type="ChEBI" id="CHEBI:29105"/>
    </ligand>
</feature>
<feature type="binding site" evidence="3">
    <location>
        <position position="88"/>
    </location>
    <ligand>
        <name>Zn(2+)</name>
        <dbReference type="ChEBI" id="CHEBI:29105"/>
    </ligand>
</feature>
<feature type="binding site" evidence="3">
    <location>
        <position position="96"/>
    </location>
    <ligand>
        <name>Zn(2+)</name>
        <dbReference type="ChEBI" id="CHEBI:29105"/>
    </ligand>
</feature>
<reference key="1">
    <citation type="journal article" date="1999" name="Nature">
        <title>Sequence and analysis of chromosome 4 of the plant Arabidopsis thaliana.</title>
        <authorList>
            <person name="Mayer K.F.X."/>
            <person name="Schueller C."/>
            <person name="Wambutt R."/>
            <person name="Murphy G."/>
            <person name="Volckaert G."/>
            <person name="Pohl T."/>
            <person name="Duesterhoeft A."/>
            <person name="Stiekema W."/>
            <person name="Entian K.-D."/>
            <person name="Terryn N."/>
            <person name="Harris B."/>
            <person name="Ansorge W."/>
            <person name="Brandt P."/>
            <person name="Grivell L.A."/>
            <person name="Rieger M."/>
            <person name="Weichselgartner M."/>
            <person name="de Simone V."/>
            <person name="Obermaier B."/>
            <person name="Mache R."/>
            <person name="Mueller M."/>
            <person name="Kreis M."/>
            <person name="Delseny M."/>
            <person name="Puigdomenech P."/>
            <person name="Watson M."/>
            <person name="Schmidtheini T."/>
            <person name="Reichert B."/>
            <person name="Portetelle D."/>
            <person name="Perez-Alonso M."/>
            <person name="Boutry M."/>
            <person name="Bancroft I."/>
            <person name="Vos P."/>
            <person name="Hoheisel J."/>
            <person name="Zimmermann W."/>
            <person name="Wedler H."/>
            <person name="Ridley P."/>
            <person name="Langham S.-A."/>
            <person name="McCullagh B."/>
            <person name="Bilham L."/>
            <person name="Robben J."/>
            <person name="van der Schueren J."/>
            <person name="Grymonprez B."/>
            <person name="Chuang Y.-J."/>
            <person name="Vandenbussche F."/>
            <person name="Braeken M."/>
            <person name="Weltjens I."/>
            <person name="Voet M."/>
            <person name="Bastiaens I."/>
            <person name="Aert R."/>
            <person name="Defoor E."/>
            <person name="Weitzenegger T."/>
            <person name="Bothe G."/>
            <person name="Ramsperger U."/>
            <person name="Hilbert H."/>
            <person name="Braun M."/>
            <person name="Holzer E."/>
            <person name="Brandt A."/>
            <person name="Peters S."/>
            <person name="van Staveren M."/>
            <person name="Dirkse W."/>
            <person name="Mooijman P."/>
            <person name="Klein Lankhorst R."/>
            <person name="Rose M."/>
            <person name="Hauf J."/>
            <person name="Koetter P."/>
            <person name="Berneiser S."/>
            <person name="Hempel S."/>
            <person name="Feldpausch M."/>
            <person name="Lamberth S."/>
            <person name="Van den Daele H."/>
            <person name="De Keyser A."/>
            <person name="Buysshaert C."/>
            <person name="Gielen J."/>
            <person name="Villarroel R."/>
            <person name="De Clercq R."/>
            <person name="van Montagu M."/>
            <person name="Rogers J."/>
            <person name="Cronin A."/>
            <person name="Quail M.A."/>
            <person name="Bray-Allen S."/>
            <person name="Clark L."/>
            <person name="Doggett J."/>
            <person name="Hall S."/>
            <person name="Kay M."/>
            <person name="Lennard N."/>
            <person name="McLay K."/>
            <person name="Mayes R."/>
            <person name="Pettett A."/>
            <person name="Rajandream M.A."/>
            <person name="Lyne M."/>
            <person name="Benes V."/>
            <person name="Rechmann S."/>
            <person name="Borkova D."/>
            <person name="Bloecker H."/>
            <person name="Scharfe M."/>
            <person name="Grimm M."/>
            <person name="Loehnert T.-H."/>
            <person name="Dose S."/>
            <person name="de Haan M."/>
            <person name="Maarse A.C."/>
            <person name="Schaefer M."/>
            <person name="Mueller-Auer S."/>
            <person name="Gabel C."/>
            <person name="Fuchs M."/>
            <person name="Fartmann B."/>
            <person name="Granderath K."/>
            <person name="Dauner D."/>
            <person name="Herzl A."/>
            <person name="Neumann S."/>
            <person name="Argiriou A."/>
            <person name="Vitale D."/>
            <person name="Liguori R."/>
            <person name="Piravandi E."/>
            <person name="Massenet O."/>
            <person name="Quigley F."/>
            <person name="Clabauld G."/>
            <person name="Muendlein A."/>
            <person name="Felber R."/>
            <person name="Schnabl S."/>
            <person name="Hiller R."/>
            <person name="Schmidt W."/>
            <person name="Lecharny A."/>
            <person name="Aubourg S."/>
            <person name="Chefdor F."/>
            <person name="Cooke R."/>
            <person name="Berger C."/>
            <person name="Monfort A."/>
            <person name="Casacuberta E."/>
            <person name="Gibbons T."/>
            <person name="Weber N."/>
            <person name="Vandenbol M."/>
            <person name="Bargues M."/>
            <person name="Terol J."/>
            <person name="Torres A."/>
            <person name="Perez-Perez A."/>
            <person name="Purnelle B."/>
            <person name="Bent E."/>
            <person name="Johnson S."/>
            <person name="Tacon D."/>
            <person name="Jesse T."/>
            <person name="Heijnen L."/>
            <person name="Schwarz S."/>
            <person name="Scholler P."/>
            <person name="Heber S."/>
            <person name="Francs P."/>
            <person name="Bielke C."/>
            <person name="Frishman D."/>
            <person name="Haase D."/>
            <person name="Lemcke K."/>
            <person name="Mewes H.-W."/>
            <person name="Stocker S."/>
            <person name="Zaccaria P."/>
            <person name="Bevan M."/>
            <person name="Wilson R.K."/>
            <person name="de la Bastide M."/>
            <person name="Habermann K."/>
            <person name="Parnell L."/>
            <person name="Dedhia N."/>
            <person name="Gnoj L."/>
            <person name="Schutz K."/>
            <person name="Huang E."/>
            <person name="Spiegel L."/>
            <person name="Sekhon M."/>
            <person name="Murray J."/>
            <person name="Sheet P."/>
            <person name="Cordes M."/>
            <person name="Abu-Threideh J."/>
            <person name="Stoneking T."/>
            <person name="Kalicki J."/>
            <person name="Graves T."/>
            <person name="Harmon G."/>
            <person name="Edwards J."/>
            <person name="Latreille P."/>
            <person name="Courtney L."/>
            <person name="Cloud J."/>
            <person name="Abbott A."/>
            <person name="Scott K."/>
            <person name="Johnson D."/>
            <person name="Minx P."/>
            <person name="Bentley D."/>
            <person name="Fulton B."/>
            <person name="Miller N."/>
            <person name="Greco T."/>
            <person name="Kemp K."/>
            <person name="Kramer J."/>
            <person name="Fulton L."/>
            <person name="Mardis E."/>
            <person name="Dante M."/>
            <person name="Pepin K."/>
            <person name="Hillier L.W."/>
            <person name="Nelson J."/>
            <person name="Spieth J."/>
            <person name="Ryan E."/>
            <person name="Andrews S."/>
            <person name="Geisel C."/>
            <person name="Layman D."/>
            <person name="Du H."/>
            <person name="Ali J."/>
            <person name="Berghoff A."/>
            <person name="Jones K."/>
            <person name="Drone K."/>
            <person name="Cotton M."/>
            <person name="Joshu C."/>
            <person name="Antonoiu B."/>
            <person name="Zidanic M."/>
            <person name="Strong C."/>
            <person name="Sun H."/>
            <person name="Lamar B."/>
            <person name="Yordan C."/>
            <person name="Ma P."/>
            <person name="Zhong J."/>
            <person name="Preston R."/>
            <person name="Vil D."/>
            <person name="Shekher M."/>
            <person name="Matero A."/>
            <person name="Shah R."/>
            <person name="Swaby I.K."/>
            <person name="O'Shaughnessy A."/>
            <person name="Rodriguez M."/>
            <person name="Hoffman J."/>
            <person name="Till S."/>
            <person name="Granat S."/>
            <person name="Shohdy N."/>
            <person name="Hasegawa A."/>
            <person name="Hameed A."/>
            <person name="Lodhi M."/>
            <person name="Johnson A."/>
            <person name="Chen E."/>
            <person name="Marra M.A."/>
            <person name="Martienssen R."/>
            <person name="McCombie W.R."/>
        </authorList>
    </citation>
    <scope>NUCLEOTIDE SEQUENCE [LARGE SCALE GENOMIC DNA]</scope>
    <source>
        <strain>cv. Columbia</strain>
    </source>
</reference>
<reference key="2">
    <citation type="journal article" date="2017" name="Plant J.">
        <title>Araport11: a complete reannotation of the Arabidopsis thaliana reference genome.</title>
        <authorList>
            <person name="Cheng C.Y."/>
            <person name="Krishnakumar V."/>
            <person name="Chan A.P."/>
            <person name="Thibaud-Nissen F."/>
            <person name="Schobel S."/>
            <person name="Town C.D."/>
        </authorList>
    </citation>
    <scope>GENOME REANNOTATION</scope>
    <source>
        <strain>cv. Columbia</strain>
    </source>
</reference>
<reference key="3">
    <citation type="submission" date="2005-01" db="EMBL/GenBank/DDBJ databases">
        <title>Arabidopsis ORF clones.</title>
        <authorList>
            <person name="Kim C.J."/>
            <person name="Chen H."/>
            <person name="Cheuk R.F."/>
            <person name="Shinn P."/>
            <person name="Ecker J.R."/>
        </authorList>
    </citation>
    <scope>NUCLEOTIDE SEQUENCE [LARGE SCALE MRNA]</scope>
    <source>
        <strain>cv. Columbia</strain>
    </source>
</reference>
<reference key="4">
    <citation type="journal article" date="2003" name="Nucleic Acids Res.">
        <title>Ten members of the Arabidopsis gene family encoding methyl-CpG-binding domain proteins are transcriptionally active and at least one, AtMBD11, is crucial for normal development.</title>
        <authorList>
            <person name="Berg A."/>
            <person name="Meza T.J."/>
            <person name="Mahic M."/>
            <person name="Thorstensen T."/>
            <person name="Kristiansen K."/>
            <person name="Aalen R.B."/>
        </authorList>
    </citation>
    <scope>MAD MOTIF</scope>
    <scope>TISSUE SPECIFICITY</scope>
    <scope>GENE FAMILY</scope>
    <scope>NOMENCLATURE</scope>
</reference>
<reference key="5">
    <citation type="journal article" date="2003" name="Plant Mol. Biol.">
        <title>Arabidopsis MBD proteins show different binding specificities and nuclear localization.</title>
        <authorList>
            <person name="Scebba F."/>
            <person name="Bernacchia G."/>
            <person name="De Bastiani M."/>
            <person name="Evangelista M."/>
            <person name="Cantoni R.M."/>
            <person name="Cella R."/>
            <person name="Locci M.T."/>
            <person name="Pitto L."/>
        </authorList>
    </citation>
    <scope>TISSUE SPECIFICITY</scope>
    <source>
        <strain>cv. Columbia</strain>
    </source>
</reference>
<reference key="6">
    <citation type="journal article" date="2003" name="Plant Physiol.">
        <title>Methylated DNA-binding proteins from Arabidopsis.</title>
        <authorList>
            <person name="Ito M."/>
            <person name="Koike A."/>
            <person name="Koizumi N."/>
            <person name="Sano H."/>
        </authorList>
    </citation>
    <scope>SUBCELLULAR LOCATION</scope>
</reference>
<reference key="7">
    <citation type="journal article" date="2005" name="Plant Physiol.">
        <title>Evolutionary divergence of monocot and dicot methyl-CpG-binding domain proteins.</title>
        <authorList>
            <person name="Springer N.M."/>
            <person name="Kaeppler S.M."/>
        </authorList>
    </citation>
    <scope>GENE FAMILY</scope>
</reference>
<reference key="8">
    <citation type="journal article" date="2007" name="Trends Plant Sci.">
        <title>Methyl-CpG-binding domain proteins in plants: interpreters of DNA methylation.</title>
        <authorList>
            <person name="Zemach A."/>
            <person name="Grafi G."/>
        </authorList>
    </citation>
    <scope>REVIEW</scope>
</reference>
<proteinExistence type="evidence at protein level"/>
<accession>Q5XEN5</accession>
<accession>O49655</accession>
<protein>
    <recommendedName>
        <fullName>Methyl-CpG-binding domain-containing protein 1</fullName>
        <shortName>AtMBD1</shortName>
        <shortName>MBD01</shortName>
    </recommendedName>
    <alternativeName>
        <fullName>Methyl-CpG-binding protein MBD1</fullName>
    </alternativeName>
</protein>
<organism>
    <name type="scientific">Arabidopsis thaliana</name>
    <name type="common">Mouse-ear cress</name>
    <dbReference type="NCBI Taxonomy" id="3702"/>
    <lineage>
        <taxon>Eukaryota</taxon>
        <taxon>Viridiplantae</taxon>
        <taxon>Streptophyta</taxon>
        <taxon>Embryophyta</taxon>
        <taxon>Tracheophyta</taxon>
        <taxon>Spermatophyta</taxon>
        <taxon>Magnoliopsida</taxon>
        <taxon>eudicotyledons</taxon>
        <taxon>Gunneridae</taxon>
        <taxon>Pentapetalae</taxon>
        <taxon>rosids</taxon>
        <taxon>malvids</taxon>
        <taxon>Brassicales</taxon>
        <taxon>Brassicaceae</taxon>
        <taxon>Camelineae</taxon>
        <taxon>Arabidopsis</taxon>
    </lineage>
</organism>
<evidence type="ECO:0000250" key="1"/>
<evidence type="ECO:0000255" key="2">
    <source>
        <dbReference type="PROSITE-ProRule" id="PRU00338"/>
    </source>
</evidence>
<evidence type="ECO:0000255" key="3">
    <source>
        <dbReference type="PROSITE-ProRule" id="PRU00454"/>
    </source>
</evidence>
<evidence type="ECO:0000256" key="4">
    <source>
        <dbReference type="SAM" id="MobiDB-lite"/>
    </source>
</evidence>
<evidence type="ECO:0000269" key="5">
    <source>
    </source>
</evidence>
<evidence type="ECO:0000269" key="6">
    <source>
    </source>
</evidence>
<evidence type="ECO:0000269" key="7">
    <source>
    </source>
</evidence>
<evidence type="ECO:0000305" key="8"/>
<dbReference type="EMBL" id="AL021635">
    <property type="protein sequence ID" value="CAA16559.1"/>
    <property type="status" value="ALT_SEQ"/>
    <property type="molecule type" value="Genomic_DNA"/>
</dbReference>
<dbReference type="EMBL" id="AL161557">
    <property type="protein sequence ID" value="CAB79229.1"/>
    <property type="status" value="ALT_SEQ"/>
    <property type="molecule type" value="Genomic_DNA"/>
</dbReference>
<dbReference type="EMBL" id="CP002687">
    <property type="protein sequence ID" value="AEE84648.1"/>
    <property type="molecule type" value="Genomic_DNA"/>
</dbReference>
<dbReference type="EMBL" id="BT015931">
    <property type="protein sequence ID" value="AAV31161.1"/>
    <property type="molecule type" value="mRNA"/>
</dbReference>
<dbReference type="EMBL" id="BT020548">
    <property type="protein sequence ID" value="AAW70394.1"/>
    <property type="molecule type" value="mRNA"/>
</dbReference>
<dbReference type="PIR" id="T04569">
    <property type="entry name" value="T04569"/>
</dbReference>
<dbReference type="RefSeq" id="NP_567667.2">
    <property type="nucleotide sequence ID" value="NM_118401.6"/>
</dbReference>
<dbReference type="SMR" id="Q5XEN5"/>
<dbReference type="BioGRID" id="13660">
    <property type="interactions" value="17"/>
</dbReference>
<dbReference type="FunCoup" id="Q5XEN5">
    <property type="interactions" value="284"/>
</dbReference>
<dbReference type="IntAct" id="Q5XEN5">
    <property type="interactions" value="17"/>
</dbReference>
<dbReference type="STRING" id="3702.Q5XEN5"/>
<dbReference type="GlyGen" id="Q5XEN5">
    <property type="glycosylation" value="1 site"/>
</dbReference>
<dbReference type="iPTMnet" id="Q5XEN5"/>
<dbReference type="PaxDb" id="3702-AT4G22745.1"/>
<dbReference type="ProteomicsDB" id="238361"/>
<dbReference type="EnsemblPlants" id="AT4G22745.1">
    <property type="protein sequence ID" value="AT4G22745.1"/>
    <property type="gene ID" value="AT4G22745"/>
</dbReference>
<dbReference type="GeneID" id="828371"/>
<dbReference type="Gramene" id="AT4G22745.1">
    <property type="protein sequence ID" value="AT4G22745.1"/>
    <property type="gene ID" value="AT4G22745"/>
</dbReference>
<dbReference type="KEGG" id="ath:AT4G22745"/>
<dbReference type="Araport" id="AT4G22745"/>
<dbReference type="TAIR" id="AT4G22745">
    <property type="gene designation" value="MBD1"/>
</dbReference>
<dbReference type="eggNOG" id="KOG4161">
    <property type="taxonomic scope" value="Eukaryota"/>
</dbReference>
<dbReference type="HOGENOM" id="CLU_109577_1_1_1"/>
<dbReference type="InParanoid" id="Q5XEN5"/>
<dbReference type="OMA" id="DANQDYK"/>
<dbReference type="PhylomeDB" id="Q5XEN5"/>
<dbReference type="PRO" id="PR:Q5XEN5"/>
<dbReference type="Proteomes" id="UP000006548">
    <property type="component" value="Chromosome 4"/>
</dbReference>
<dbReference type="ExpressionAtlas" id="Q5XEN5">
    <property type="expression patterns" value="baseline and differential"/>
</dbReference>
<dbReference type="GO" id="GO:0000118">
    <property type="term" value="C:histone deacetylase complex"/>
    <property type="evidence" value="ECO:0000314"/>
    <property type="project" value="TAIR"/>
</dbReference>
<dbReference type="GO" id="GO:0005634">
    <property type="term" value="C:nucleus"/>
    <property type="evidence" value="ECO:0000314"/>
    <property type="project" value="UniProtKB"/>
</dbReference>
<dbReference type="GO" id="GO:0008327">
    <property type="term" value="F:methyl-CpG binding"/>
    <property type="evidence" value="ECO:0000250"/>
    <property type="project" value="TAIR"/>
</dbReference>
<dbReference type="GO" id="GO:0008270">
    <property type="term" value="F:zinc ion binding"/>
    <property type="evidence" value="ECO:0007669"/>
    <property type="project" value="UniProtKB-KW"/>
</dbReference>
<dbReference type="CDD" id="cd01396">
    <property type="entry name" value="MeCP2_MBD"/>
    <property type="match status" value="1"/>
</dbReference>
<dbReference type="FunFam" id="3.30.890.10:FF:000012">
    <property type="entry name" value="Methyl-CpG-binding domain-containing protein 1"/>
    <property type="match status" value="1"/>
</dbReference>
<dbReference type="Gene3D" id="3.30.40.100">
    <property type="match status" value="1"/>
</dbReference>
<dbReference type="Gene3D" id="3.30.890.10">
    <property type="entry name" value="Methyl-cpg-binding Protein 2, Chain A"/>
    <property type="match status" value="1"/>
</dbReference>
<dbReference type="InterPro" id="IPR016177">
    <property type="entry name" value="DNA-bd_dom_sf"/>
</dbReference>
<dbReference type="InterPro" id="IPR001739">
    <property type="entry name" value="Methyl_CpG_DNA-bd"/>
</dbReference>
<dbReference type="InterPro" id="IPR011124">
    <property type="entry name" value="Znf_CW"/>
</dbReference>
<dbReference type="PANTHER" id="PTHR12396">
    <property type="entry name" value="METHYL-CPG BINDING PROTEIN, MBD"/>
    <property type="match status" value="1"/>
</dbReference>
<dbReference type="PANTHER" id="PTHR12396:SF10">
    <property type="entry name" value="METHYL-CPG-BINDING DOMAIN-CONTAINING PROTEIN 1-RELATED"/>
    <property type="match status" value="1"/>
</dbReference>
<dbReference type="Pfam" id="PF01429">
    <property type="entry name" value="MBD"/>
    <property type="match status" value="1"/>
</dbReference>
<dbReference type="Pfam" id="PF07496">
    <property type="entry name" value="zf-CW"/>
    <property type="match status" value="1"/>
</dbReference>
<dbReference type="SMART" id="SM00391">
    <property type="entry name" value="MBD"/>
    <property type="match status" value="1"/>
</dbReference>
<dbReference type="SUPFAM" id="SSF54171">
    <property type="entry name" value="DNA-binding domain"/>
    <property type="match status" value="1"/>
</dbReference>
<dbReference type="PROSITE" id="PS50982">
    <property type="entry name" value="MBD"/>
    <property type="match status" value="1"/>
</dbReference>
<dbReference type="PROSITE" id="PS51050">
    <property type="entry name" value="ZF_CW"/>
    <property type="match status" value="1"/>
</dbReference>
<sequence length="204" mass="23152">MLPFPAMNLKKSRSENSSVASSGSKIEEQTEKSAEPTTIKVQKKAGTPGRSIDVFAVQCEKCMKWRKIDTQDEYEDIRSRVQEDPFFCKTKEGVSCEDVGDLNYDSSRTWVIDKPGLPRTPRGFKRSLILRKDYSKMDAYYITPTGKKLKSRNEIAAFIDANQDYKYALLGDFNFTVPKVMEETVPSGILSDRTPKPSRKVTID</sequence>